<gene>
    <name evidence="1" type="primary">hutU</name>
    <name type="ordered locus">PBPRA2172</name>
</gene>
<comment type="function">
    <text evidence="1">Catalyzes the conversion of urocanate to 4-imidazolone-5-propionate.</text>
</comment>
<comment type="catalytic activity">
    <reaction evidence="1">
        <text>4-imidazolone-5-propanoate = trans-urocanate + H2O</text>
        <dbReference type="Rhea" id="RHEA:13101"/>
        <dbReference type="ChEBI" id="CHEBI:15377"/>
        <dbReference type="ChEBI" id="CHEBI:17771"/>
        <dbReference type="ChEBI" id="CHEBI:77893"/>
        <dbReference type="EC" id="4.2.1.49"/>
    </reaction>
</comment>
<comment type="cofactor">
    <cofactor evidence="1">
        <name>NAD(+)</name>
        <dbReference type="ChEBI" id="CHEBI:57540"/>
    </cofactor>
    <text evidence="1">Binds 1 NAD(+) per subunit.</text>
</comment>
<comment type="pathway">
    <text evidence="1">Amino-acid degradation; L-histidine degradation into L-glutamate; N-formimidoyl-L-glutamate from L-histidine: step 2/3.</text>
</comment>
<comment type="subcellular location">
    <subcellularLocation>
        <location evidence="1">Cytoplasm</location>
    </subcellularLocation>
</comment>
<comment type="similarity">
    <text evidence="1">Belongs to the urocanase family.</text>
</comment>
<reference key="1">
    <citation type="journal article" date="2005" name="Science">
        <title>Life at depth: Photobacterium profundum genome sequence and expression analysis.</title>
        <authorList>
            <person name="Vezzi A."/>
            <person name="Campanaro S."/>
            <person name="D'Angelo M."/>
            <person name="Simonato F."/>
            <person name="Vitulo N."/>
            <person name="Lauro F.M."/>
            <person name="Cestaro A."/>
            <person name="Malacrida G."/>
            <person name="Simionati B."/>
            <person name="Cannata N."/>
            <person name="Romualdi C."/>
            <person name="Bartlett D.H."/>
            <person name="Valle G."/>
        </authorList>
    </citation>
    <scope>NUCLEOTIDE SEQUENCE [LARGE SCALE GENOMIC DNA]</scope>
    <source>
        <strain>ATCC BAA-1253 / SS9</strain>
    </source>
</reference>
<accession>Q6LQ57</accession>
<sequence length="568" mass="61884">MTQSTIPNPRLDESRTIIAPTGTQLNAKSWLTEAPLRMLMNNLHPDVAEHPHALVVYGGIGRAARNWECYDKIVEVLKRLEDDETLIVQSGKPVGVFKTHTNAPRVLIANSNLVPHWANWEHFNELDKEGLMMYGQMTAGSWIYIGSQGIVQGTYETFVAMARQHFNGDAKGRWVLTGGLGGMGGAQPLAATMAGFSMLAVECDESRIDYRLRTGYVDSKATTLDEALAIIEESKQTGKPVSVGLLGNAADVYADIVKRGIVPDVTTDQTSAHDPLNGYLPQGWSMEHAAAMRLEDEAIVVKAAKQSMAVQVQAMLALQEAGSATVDYGNNIRQMALEEGVENAFDFPGFVPAYIRPLFCEGIGPFRWVALSGDPEDIYKTDQKVKELIPDNPHLHNWLDMARERIQFQGLPARICWVGLKDRARLGKAFNEMVKNGELKAPIVIGRDHLDSGSVASPNRETEGMMDGSDAVSDWPLLNALLNTASGATWVSLHHGGGVGMGFSQHSGMVIVCDGTDDAAERVGRVLRNDPATGVMRHADAGYDIAINCAEEQGLDLPMVNTKNTHSK</sequence>
<evidence type="ECO:0000255" key="1">
    <source>
        <dbReference type="HAMAP-Rule" id="MF_00577"/>
    </source>
</evidence>
<protein>
    <recommendedName>
        <fullName evidence="1">Urocanate hydratase</fullName>
        <shortName evidence="1">Urocanase</shortName>
        <ecNumber evidence="1">4.2.1.49</ecNumber>
    </recommendedName>
    <alternativeName>
        <fullName evidence="1">Imidazolonepropionate hydrolase</fullName>
    </alternativeName>
</protein>
<name>HUTU_PHOPR</name>
<keyword id="KW-0963">Cytoplasm</keyword>
<keyword id="KW-0369">Histidine metabolism</keyword>
<keyword id="KW-0456">Lyase</keyword>
<keyword id="KW-0520">NAD</keyword>
<keyword id="KW-1185">Reference proteome</keyword>
<organism>
    <name type="scientific">Photobacterium profundum (strain SS9)</name>
    <dbReference type="NCBI Taxonomy" id="298386"/>
    <lineage>
        <taxon>Bacteria</taxon>
        <taxon>Pseudomonadati</taxon>
        <taxon>Pseudomonadota</taxon>
        <taxon>Gammaproteobacteria</taxon>
        <taxon>Vibrionales</taxon>
        <taxon>Vibrionaceae</taxon>
        <taxon>Photobacterium</taxon>
    </lineage>
</organism>
<dbReference type="EC" id="4.2.1.49" evidence="1"/>
<dbReference type="EMBL" id="CR378670">
    <property type="protein sequence ID" value="CAG20569.1"/>
    <property type="molecule type" value="Genomic_DNA"/>
</dbReference>
<dbReference type="RefSeq" id="WP_011218860.1">
    <property type="nucleotide sequence ID" value="NC_006370.1"/>
</dbReference>
<dbReference type="SMR" id="Q6LQ57"/>
<dbReference type="STRING" id="298386.PBPRA2172"/>
<dbReference type="KEGG" id="ppr:PBPRA2172"/>
<dbReference type="eggNOG" id="COG2987">
    <property type="taxonomic scope" value="Bacteria"/>
</dbReference>
<dbReference type="HOGENOM" id="CLU_018868_0_1_6"/>
<dbReference type="UniPathway" id="UPA00379">
    <property type="reaction ID" value="UER00550"/>
</dbReference>
<dbReference type="Proteomes" id="UP000000593">
    <property type="component" value="Chromosome 1"/>
</dbReference>
<dbReference type="GO" id="GO:0005737">
    <property type="term" value="C:cytoplasm"/>
    <property type="evidence" value="ECO:0007669"/>
    <property type="project" value="UniProtKB-SubCell"/>
</dbReference>
<dbReference type="GO" id="GO:0016153">
    <property type="term" value="F:urocanate hydratase activity"/>
    <property type="evidence" value="ECO:0007669"/>
    <property type="project" value="UniProtKB-UniRule"/>
</dbReference>
<dbReference type="GO" id="GO:0019556">
    <property type="term" value="P:L-histidine catabolic process to glutamate and formamide"/>
    <property type="evidence" value="ECO:0007669"/>
    <property type="project" value="UniProtKB-UniPathway"/>
</dbReference>
<dbReference type="GO" id="GO:0019557">
    <property type="term" value="P:L-histidine catabolic process to glutamate and formate"/>
    <property type="evidence" value="ECO:0007669"/>
    <property type="project" value="UniProtKB-UniPathway"/>
</dbReference>
<dbReference type="FunFam" id="3.40.50.10730:FF:000001">
    <property type="entry name" value="Urocanate hydratase"/>
    <property type="match status" value="1"/>
</dbReference>
<dbReference type="Gene3D" id="3.40.50.10730">
    <property type="entry name" value="Urocanase like domains"/>
    <property type="match status" value="1"/>
</dbReference>
<dbReference type="Gene3D" id="3.40.1770.10">
    <property type="entry name" value="Urocanase superfamily"/>
    <property type="match status" value="1"/>
</dbReference>
<dbReference type="HAMAP" id="MF_00577">
    <property type="entry name" value="HutU"/>
    <property type="match status" value="1"/>
</dbReference>
<dbReference type="InterPro" id="IPR055351">
    <property type="entry name" value="Urocanase"/>
</dbReference>
<dbReference type="InterPro" id="IPR023637">
    <property type="entry name" value="Urocanase-like"/>
</dbReference>
<dbReference type="InterPro" id="IPR035401">
    <property type="entry name" value="Urocanase_C"/>
</dbReference>
<dbReference type="InterPro" id="IPR038364">
    <property type="entry name" value="Urocanase_central_sf"/>
</dbReference>
<dbReference type="InterPro" id="IPR023636">
    <property type="entry name" value="Urocanase_CS"/>
</dbReference>
<dbReference type="InterPro" id="IPR035400">
    <property type="entry name" value="Urocanase_N"/>
</dbReference>
<dbReference type="InterPro" id="IPR035085">
    <property type="entry name" value="Urocanase_Rossmann-like"/>
</dbReference>
<dbReference type="InterPro" id="IPR036190">
    <property type="entry name" value="Urocanase_sf"/>
</dbReference>
<dbReference type="NCBIfam" id="TIGR01228">
    <property type="entry name" value="hutU"/>
    <property type="match status" value="1"/>
</dbReference>
<dbReference type="NCBIfam" id="NF003820">
    <property type="entry name" value="PRK05414.1"/>
    <property type="match status" value="1"/>
</dbReference>
<dbReference type="PANTHER" id="PTHR12216">
    <property type="entry name" value="UROCANATE HYDRATASE"/>
    <property type="match status" value="1"/>
</dbReference>
<dbReference type="PANTHER" id="PTHR12216:SF4">
    <property type="entry name" value="UROCANATE HYDRATASE"/>
    <property type="match status" value="1"/>
</dbReference>
<dbReference type="Pfam" id="PF01175">
    <property type="entry name" value="Urocanase"/>
    <property type="match status" value="1"/>
</dbReference>
<dbReference type="Pfam" id="PF17392">
    <property type="entry name" value="Urocanase_C"/>
    <property type="match status" value="1"/>
</dbReference>
<dbReference type="Pfam" id="PF17391">
    <property type="entry name" value="Urocanase_N"/>
    <property type="match status" value="1"/>
</dbReference>
<dbReference type="PIRSF" id="PIRSF001423">
    <property type="entry name" value="Urocanate_hydrat"/>
    <property type="match status" value="1"/>
</dbReference>
<dbReference type="SUPFAM" id="SSF111326">
    <property type="entry name" value="Urocanase"/>
    <property type="match status" value="1"/>
</dbReference>
<dbReference type="PROSITE" id="PS01233">
    <property type="entry name" value="UROCANASE"/>
    <property type="match status" value="1"/>
</dbReference>
<feature type="chain" id="PRO_1000025137" description="Urocanate hydratase">
    <location>
        <begin position="1"/>
        <end position="568"/>
    </location>
</feature>
<feature type="active site" evidence="1">
    <location>
        <position position="416"/>
    </location>
</feature>
<feature type="binding site" evidence="1">
    <location>
        <begin position="58"/>
        <end position="59"/>
    </location>
    <ligand>
        <name>NAD(+)</name>
        <dbReference type="ChEBI" id="CHEBI:57540"/>
    </ligand>
</feature>
<feature type="binding site" evidence="1">
    <location>
        <position position="136"/>
    </location>
    <ligand>
        <name>NAD(+)</name>
        <dbReference type="ChEBI" id="CHEBI:57540"/>
    </ligand>
</feature>
<feature type="binding site" evidence="1">
    <location>
        <begin position="182"/>
        <end position="184"/>
    </location>
    <ligand>
        <name>NAD(+)</name>
        <dbReference type="ChEBI" id="CHEBI:57540"/>
    </ligand>
</feature>
<feature type="binding site" evidence="1">
    <location>
        <position position="202"/>
    </location>
    <ligand>
        <name>NAD(+)</name>
        <dbReference type="ChEBI" id="CHEBI:57540"/>
    </ligand>
</feature>
<feature type="binding site" evidence="1">
    <location>
        <position position="207"/>
    </location>
    <ligand>
        <name>NAD(+)</name>
        <dbReference type="ChEBI" id="CHEBI:57540"/>
    </ligand>
</feature>
<feature type="binding site" evidence="1">
    <location>
        <begin position="248"/>
        <end position="249"/>
    </location>
    <ligand>
        <name>NAD(+)</name>
        <dbReference type="ChEBI" id="CHEBI:57540"/>
    </ligand>
</feature>
<feature type="binding site" evidence="1">
    <location>
        <begin position="269"/>
        <end position="273"/>
    </location>
    <ligand>
        <name>NAD(+)</name>
        <dbReference type="ChEBI" id="CHEBI:57540"/>
    </ligand>
</feature>
<feature type="binding site" evidence="1">
    <location>
        <begin position="279"/>
        <end position="280"/>
    </location>
    <ligand>
        <name>NAD(+)</name>
        <dbReference type="ChEBI" id="CHEBI:57540"/>
    </ligand>
</feature>
<feature type="binding site" evidence="1">
    <location>
        <position position="328"/>
    </location>
    <ligand>
        <name>NAD(+)</name>
        <dbReference type="ChEBI" id="CHEBI:57540"/>
    </ligand>
</feature>
<feature type="binding site" evidence="1">
    <location>
        <position position="498"/>
    </location>
    <ligand>
        <name>NAD(+)</name>
        <dbReference type="ChEBI" id="CHEBI:57540"/>
    </ligand>
</feature>
<proteinExistence type="inferred from homology"/>